<reference key="1">
    <citation type="journal article" date="2003" name="Science">
        <title>Genome of Geobacter sulfurreducens: metal reduction in subsurface environments.</title>
        <authorList>
            <person name="Methe B.A."/>
            <person name="Nelson K.E."/>
            <person name="Eisen J.A."/>
            <person name="Paulsen I.T."/>
            <person name="Nelson W.C."/>
            <person name="Heidelberg J.F."/>
            <person name="Wu D."/>
            <person name="Wu M."/>
            <person name="Ward N.L."/>
            <person name="Beanan M.J."/>
            <person name="Dodson R.J."/>
            <person name="Madupu R."/>
            <person name="Brinkac L.M."/>
            <person name="Daugherty S.C."/>
            <person name="DeBoy R.T."/>
            <person name="Durkin A.S."/>
            <person name="Gwinn M.L."/>
            <person name="Kolonay J.F."/>
            <person name="Sullivan S.A."/>
            <person name="Haft D.H."/>
            <person name="Selengut J."/>
            <person name="Davidsen T.M."/>
            <person name="Zafar N."/>
            <person name="White O."/>
            <person name="Tran B."/>
            <person name="Romero C."/>
            <person name="Forberger H.A."/>
            <person name="Weidman J.F."/>
            <person name="Khouri H.M."/>
            <person name="Feldblyum T.V."/>
            <person name="Utterback T.R."/>
            <person name="Van Aken S.E."/>
            <person name="Lovley D.R."/>
            <person name="Fraser C.M."/>
        </authorList>
    </citation>
    <scope>NUCLEOTIDE SEQUENCE [LARGE SCALE GENOMIC DNA]</scope>
    <source>
        <strain>ATCC 51573 / DSM 12127 / PCA</strain>
    </source>
</reference>
<organism>
    <name type="scientific">Geobacter sulfurreducens (strain ATCC 51573 / DSM 12127 / PCA)</name>
    <dbReference type="NCBI Taxonomy" id="243231"/>
    <lineage>
        <taxon>Bacteria</taxon>
        <taxon>Pseudomonadati</taxon>
        <taxon>Thermodesulfobacteriota</taxon>
        <taxon>Desulfuromonadia</taxon>
        <taxon>Geobacterales</taxon>
        <taxon>Geobacteraceae</taxon>
        <taxon>Geobacter</taxon>
    </lineage>
</organism>
<protein>
    <recommendedName>
        <fullName evidence="1">NADH-quinone oxidoreductase subunit B</fullName>
        <ecNumber evidence="1">7.1.1.-</ecNumber>
    </recommendedName>
    <alternativeName>
        <fullName evidence="1">NADH dehydrogenase I subunit B</fullName>
    </alternativeName>
    <alternativeName>
        <fullName evidence="1">NDH-1 subunit B</fullName>
    </alternativeName>
</protein>
<gene>
    <name evidence="1" type="primary">nuoB</name>
    <name type="ordered locus">GSU0339</name>
</gene>
<comment type="function">
    <text evidence="1">NDH-1 shuttles electrons from NADH, via FMN and iron-sulfur (Fe-S) centers, to quinones in the respiratory chain. The immediate electron acceptor for the enzyme in this species is believed to be ubiquinone. Couples the redox reaction to proton translocation (for every two electrons transferred, four hydrogen ions are translocated across the cytoplasmic membrane), and thus conserves the redox energy in a proton gradient.</text>
</comment>
<comment type="catalytic activity">
    <reaction evidence="1">
        <text>a quinone + NADH + 5 H(+)(in) = a quinol + NAD(+) + 4 H(+)(out)</text>
        <dbReference type="Rhea" id="RHEA:57888"/>
        <dbReference type="ChEBI" id="CHEBI:15378"/>
        <dbReference type="ChEBI" id="CHEBI:24646"/>
        <dbReference type="ChEBI" id="CHEBI:57540"/>
        <dbReference type="ChEBI" id="CHEBI:57945"/>
        <dbReference type="ChEBI" id="CHEBI:132124"/>
    </reaction>
</comment>
<comment type="cofactor">
    <cofactor evidence="1">
        <name>[4Fe-4S] cluster</name>
        <dbReference type="ChEBI" id="CHEBI:49883"/>
    </cofactor>
    <text evidence="1">Binds 1 [4Fe-4S] cluster.</text>
</comment>
<comment type="subunit">
    <text evidence="1">NDH-1 is composed of 14 different subunits. Subunits NuoB, C, D, E, F, and G constitute the peripheral sector of the complex.</text>
</comment>
<comment type="subcellular location">
    <subcellularLocation>
        <location evidence="1">Cell inner membrane</location>
        <topology evidence="1">Peripheral membrane protein</topology>
        <orientation evidence="1">Cytoplasmic side</orientation>
    </subcellularLocation>
</comment>
<comment type="similarity">
    <text evidence="1">Belongs to the complex I 20 kDa subunit family.</text>
</comment>
<accession>Q74GA7</accession>
<dbReference type="EC" id="7.1.1.-" evidence="1"/>
<dbReference type="EMBL" id="AE017180">
    <property type="protein sequence ID" value="AAR33672.1"/>
    <property type="molecule type" value="Genomic_DNA"/>
</dbReference>
<dbReference type="RefSeq" id="NP_951399.1">
    <property type="nucleotide sequence ID" value="NC_002939.5"/>
</dbReference>
<dbReference type="RefSeq" id="WP_010941007.1">
    <property type="nucleotide sequence ID" value="NC_002939.5"/>
</dbReference>
<dbReference type="SMR" id="Q74GA7"/>
<dbReference type="FunCoup" id="Q74GA7">
    <property type="interactions" value="372"/>
</dbReference>
<dbReference type="STRING" id="243231.GSU0339"/>
<dbReference type="TCDB" id="3.D.1.5.1">
    <property type="family name" value="the h+ or na+-translocating nadh dehydrogenase (ndh) family"/>
</dbReference>
<dbReference type="EnsemblBacteria" id="AAR33672">
    <property type="protein sequence ID" value="AAR33672"/>
    <property type="gene ID" value="GSU0339"/>
</dbReference>
<dbReference type="KEGG" id="gsu:GSU0339"/>
<dbReference type="PATRIC" id="fig|243231.5.peg.336"/>
<dbReference type="eggNOG" id="COG0377">
    <property type="taxonomic scope" value="Bacteria"/>
</dbReference>
<dbReference type="HOGENOM" id="CLU_055737_7_3_7"/>
<dbReference type="InParanoid" id="Q74GA7"/>
<dbReference type="OrthoDB" id="9786737at2"/>
<dbReference type="Proteomes" id="UP000000577">
    <property type="component" value="Chromosome"/>
</dbReference>
<dbReference type="GO" id="GO:0005886">
    <property type="term" value="C:plasma membrane"/>
    <property type="evidence" value="ECO:0007669"/>
    <property type="project" value="UniProtKB-SubCell"/>
</dbReference>
<dbReference type="GO" id="GO:0045271">
    <property type="term" value="C:respiratory chain complex I"/>
    <property type="evidence" value="ECO:0000318"/>
    <property type="project" value="GO_Central"/>
</dbReference>
<dbReference type="GO" id="GO:0051539">
    <property type="term" value="F:4 iron, 4 sulfur cluster binding"/>
    <property type="evidence" value="ECO:0007669"/>
    <property type="project" value="UniProtKB-KW"/>
</dbReference>
<dbReference type="GO" id="GO:0005506">
    <property type="term" value="F:iron ion binding"/>
    <property type="evidence" value="ECO:0007669"/>
    <property type="project" value="UniProtKB-UniRule"/>
</dbReference>
<dbReference type="GO" id="GO:0008137">
    <property type="term" value="F:NADH dehydrogenase (ubiquinone) activity"/>
    <property type="evidence" value="ECO:0000318"/>
    <property type="project" value="GO_Central"/>
</dbReference>
<dbReference type="GO" id="GO:0050136">
    <property type="term" value="F:NADH:ubiquinone reductase (non-electrogenic) activity"/>
    <property type="evidence" value="ECO:0007669"/>
    <property type="project" value="UniProtKB-UniRule"/>
</dbReference>
<dbReference type="GO" id="GO:0048038">
    <property type="term" value="F:quinone binding"/>
    <property type="evidence" value="ECO:0007669"/>
    <property type="project" value="UniProtKB-KW"/>
</dbReference>
<dbReference type="GO" id="GO:0009060">
    <property type="term" value="P:aerobic respiration"/>
    <property type="evidence" value="ECO:0000318"/>
    <property type="project" value="GO_Central"/>
</dbReference>
<dbReference type="GO" id="GO:0015990">
    <property type="term" value="P:electron transport coupled proton transport"/>
    <property type="evidence" value="ECO:0000318"/>
    <property type="project" value="GO_Central"/>
</dbReference>
<dbReference type="FunFam" id="3.40.50.12280:FF:000002">
    <property type="entry name" value="NADH-quinone oxidoreductase subunit B"/>
    <property type="match status" value="1"/>
</dbReference>
<dbReference type="Gene3D" id="3.40.50.12280">
    <property type="match status" value="1"/>
</dbReference>
<dbReference type="HAMAP" id="MF_01356">
    <property type="entry name" value="NDH1_NuoB"/>
    <property type="match status" value="1"/>
</dbReference>
<dbReference type="InterPro" id="IPR006137">
    <property type="entry name" value="NADH_UbQ_OxRdtase-like_20kDa"/>
</dbReference>
<dbReference type="InterPro" id="IPR006138">
    <property type="entry name" value="NADH_UQ_OxRdtase_20Kd_su"/>
</dbReference>
<dbReference type="NCBIfam" id="TIGR01957">
    <property type="entry name" value="nuoB_fam"/>
    <property type="match status" value="1"/>
</dbReference>
<dbReference type="NCBIfam" id="NF005012">
    <property type="entry name" value="PRK06411.1"/>
    <property type="match status" value="1"/>
</dbReference>
<dbReference type="PANTHER" id="PTHR11995">
    <property type="entry name" value="NADH DEHYDROGENASE"/>
    <property type="match status" value="1"/>
</dbReference>
<dbReference type="PANTHER" id="PTHR11995:SF14">
    <property type="entry name" value="NADH DEHYDROGENASE [UBIQUINONE] IRON-SULFUR PROTEIN 7, MITOCHONDRIAL"/>
    <property type="match status" value="1"/>
</dbReference>
<dbReference type="Pfam" id="PF01058">
    <property type="entry name" value="Oxidored_q6"/>
    <property type="match status" value="1"/>
</dbReference>
<dbReference type="SUPFAM" id="SSF56770">
    <property type="entry name" value="HydA/Nqo6-like"/>
    <property type="match status" value="1"/>
</dbReference>
<dbReference type="PROSITE" id="PS01150">
    <property type="entry name" value="COMPLEX1_20K"/>
    <property type="match status" value="1"/>
</dbReference>
<feature type="chain" id="PRO_0000376242" description="NADH-quinone oxidoreductase subunit B">
    <location>
        <begin position="1"/>
        <end position="170"/>
    </location>
</feature>
<feature type="binding site" evidence="1">
    <location>
        <position position="37"/>
    </location>
    <ligand>
        <name>[4Fe-4S] cluster</name>
        <dbReference type="ChEBI" id="CHEBI:49883"/>
    </ligand>
</feature>
<feature type="binding site" evidence="1">
    <location>
        <position position="38"/>
    </location>
    <ligand>
        <name>[4Fe-4S] cluster</name>
        <dbReference type="ChEBI" id="CHEBI:49883"/>
    </ligand>
</feature>
<feature type="binding site" evidence="1">
    <location>
        <position position="102"/>
    </location>
    <ligand>
        <name>[4Fe-4S] cluster</name>
        <dbReference type="ChEBI" id="CHEBI:49883"/>
    </ligand>
</feature>
<feature type="binding site" evidence="1">
    <location>
        <position position="131"/>
    </location>
    <ligand>
        <name>[4Fe-4S] cluster</name>
        <dbReference type="ChEBI" id="CHEBI:49883"/>
    </ligand>
</feature>
<evidence type="ECO:0000255" key="1">
    <source>
        <dbReference type="HAMAP-Rule" id="MF_01356"/>
    </source>
</evidence>
<proteinExistence type="inferred from homology"/>
<keyword id="KW-0004">4Fe-4S</keyword>
<keyword id="KW-0997">Cell inner membrane</keyword>
<keyword id="KW-1003">Cell membrane</keyword>
<keyword id="KW-0408">Iron</keyword>
<keyword id="KW-0411">Iron-sulfur</keyword>
<keyword id="KW-0472">Membrane</keyword>
<keyword id="KW-0479">Metal-binding</keyword>
<keyword id="KW-0520">NAD</keyword>
<keyword id="KW-0874">Quinone</keyword>
<keyword id="KW-1185">Reference proteome</keyword>
<keyword id="KW-1278">Translocase</keyword>
<keyword id="KW-0813">Transport</keyword>
<keyword id="KW-0830">Ubiquinone</keyword>
<sequence length="170" mass="18366">MGVDQPLGDNFITTSLDSLVNWARKSSIWPMTFGLACCAIEMMATGASHNDLDRFGIIFRASPRQSDCIIIAGTVTKKMLPVIKTVYEQMPEPKWVVAMGACACSGGVFDTYSVVQGIDTALPVDVYIPGCPPRPEALLYGLLKLQDKIMKDKNSFGSTIGLGERLESAA</sequence>
<name>NUOB_GEOSL</name>